<evidence type="ECO:0000255" key="1">
    <source>
        <dbReference type="HAMAP-Rule" id="MF_03148"/>
    </source>
</evidence>
<feature type="chain" id="PRO_0000413125" description="Inosine triphosphate pyrophosphatase">
    <location>
        <begin position="1"/>
        <end position="191"/>
    </location>
</feature>
<feature type="binding site" evidence="1">
    <location>
        <begin position="12"/>
        <end position="17"/>
    </location>
    <ligand>
        <name>ITP</name>
        <dbReference type="ChEBI" id="CHEBI:61402"/>
    </ligand>
</feature>
<feature type="binding site" evidence="1">
    <location>
        <position position="42"/>
    </location>
    <ligand>
        <name>Mg(2+)</name>
        <dbReference type="ChEBI" id="CHEBI:18420"/>
    </ligand>
</feature>
<feature type="binding site" evidence="1">
    <location>
        <position position="54"/>
    </location>
    <ligand>
        <name>ITP</name>
        <dbReference type="ChEBI" id="CHEBI:61402"/>
    </ligand>
</feature>
<feature type="binding site" evidence="1">
    <location>
        <begin position="70"/>
        <end position="71"/>
    </location>
    <ligand>
        <name>ITP</name>
        <dbReference type="ChEBI" id="CHEBI:61402"/>
    </ligand>
</feature>
<feature type="binding site" evidence="1">
    <location>
        <position position="87"/>
    </location>
    <ligand>
        <name>ITP</name>
        <dbReference type="ChEBI" id="CHEBI:61402"/>
    </ligand>
</feature>
<feature type="binding site" evidence="1">
    <location>
        <begin position="145"/>
        <end position="148"/>
    </location>
    <ligand>
        <name>ITP</name>
        <dbReference type="ChEBI" id="CHEBI:61402"/>
    </ligand>
</feature>
<feature type="binding site" evidence="1">
    <location>
        <position position="168"/>
    </location>
    <ligand>
        <name>ITP</name>
        <dbReference type="ChEBI" id="CHEBI:61402"/>
    </ligand>
</feature>
<feature type="binding site" evidence="1">
    <location>
        <begin position="173"/>
        <end position="174"/>
    </location>
    <ligand>
        <name>ITP</name>
        <dbReference type="ChEBI" id="CHEBI:61402"/>
    </ligand>
</feature>
<organism>
    <name type="scientific">Phytophthora infestans (strain T30-4)</name>
    <name type="common">Potato late blight agent</name>
    <dbReference type="NCBI Taxonomy" id="403677"/>
    <lineage>
        <taxon>Eukaryota</taxon>
        <taxon>Sar</taxon>
        <taxon>Stramenopiles</taxon>
        <taxon>Oomycota</taxon>
        <taxon>Peronosporales</taxon>
        <taxon>Peronosporaceae</taxon>
        <taxon>Phytophthora</taxon>
    </lineage>
</organism>
<proteinExistence type="inferred from homology"/>
<reference key="1">
    <citation type="journal article" date="2009" name="Nature">
        <title>Genome sequence and analysis of the Irish potato famine pathogen Phytophthora infestans.</title>
        <authorList>
            <consortium name="The Broad Institute Genome Sequencing Platform"/>
            <person name="Haas B.J."/>
            <person name="Kamoun S."/>
            <person name="Zody M.C."/>
            <person name="Jiang R.H."/>
            <person name="Handsaker R.E."/>
            <person name="Cano L.M."/>
            <person name="Grabherr M."/>
            <person name="Kodira C.D."/>
            <person name="Raffaele S."/>
            <person name="Torto-Alalibo T."/>
            <person name="Bozkurt T.O."/>
            <person name="Ah-Fong A.M."/>
            <person name="Alvarado L."/>
            <person name="Anderson V.L."/>
            <person name="Armstrong M.R."/>
            <person name="Avrova A."/>
            <person name="Baxter L."/>
            <person name="Beynon J."/>
            <person name="Boevink P.C."/>
            <person name="Bollmann S.R."/>
            <person name="Bos J.I."/>
            <person name="Bulone V."/>
            <person name="Cai G."/>
            <person name="Cakir C."/>
            <person name="Carrington J.C."/>
            <person name="Chawner M."/>
            <person name="Conti L."/>
            <person name="Costanzo S."/>
            <person name="Ewan R."/>
            <person name="Fahlgren N."/>
            <person name="Fischbach M.A."/>
            <person name="Fugelstad J."/>
            <person name="Gilroy E.M."/>
            <person name="Gnerre S."/>
            <person name="Green P.J."/>
            <person name="Grenville-Briggs L.J."/>
            <person name="Griffith J."/>
            <person name="Grunwald N.J."/>
            <person name="Horn K."/>
            <person name="Horner N.R."/>
            <person name="Hu C.H."/>
            <person name="Huitema E."/>
            <person name="Jeong D.H."/>
            <person name="Jones A.M."/>
            <person name="Jones J.D."/>
            <person name="Jones R.W."/>
            <person name="Karlsson E.K."/>
            <person name="Kunjeti S.G."/>
            <person name="Lamour K."/>
            <person name="Liu Z."/>
            <person name="Ma L."/>
            <person name="Maclean D."/>
            <person name="Chibucos M.C."/>
            <person name="McDonald H."/>
            <person name="McWalters J."/>
            <person name="Meijer H.J."/>
            <person name="Morgan W."/>
            <person name="Morris P.F."/>
            <person name="Munro C.A."/>
            <person name="O'Neill K."/>
            <person name="Ospina-Giraldo M."/>
            <person name="Pinzon A."/>
            <person name="Pritchard L."/>
            <person name="Ramsahoye B."/>
            <person name="Ren Q."/>
            <person name="Restrepo S."/>
            <person name="Roy S."/>
            <person name="Sadanandom A."/>
            <person name="Savidor A."/>
            <person name="Schornack S."/>
            <person name="Schwartz D.C."/>
            <person name="Schumann U.D."/>
            <person name="Schwessinger B."/>
            <person name="Seyer L."/>
            <person name="Sharpe T."/>
            <person name="Silvar C."/>
            <person name="Song J."/>
            <person name="Studholme D.J."/>
            <person name="Sykes S."/>
            <person name="Thines M."/>
            <person name="van de Vondervoort P.J."/>
            <person name="Phuntumart V."/>
            <person name="Wawra S."/>
            <person name="Weide R."/>
            <person name="Win J."/>
            <person name="Young C."/>
            <person name="Zhou S."/>
            <person name="Fry W."/>
            <person name="Meyers B.C."/>
            <person name="van West P."/>
            <person name="Ristaino J."/>
            <person name="Govers F."/>
            <person name="Birch P.R."/>
            <person name="Whisson S.C."/>
            <person name="Judelson H.S."/>
            <person name="Nusbaum C."/>
        </authorList>
    </citation>
    <scope>NUCLEOTIDE SEQUENCE [LARGE SCALE GENOMIC DNA]</scope>
    <source>
        <strain>T30-4</strain>
    </source>
</reference>
<gene>
    <name type="ORF">PITG_03601</name>
</gene>
<comment type="function">
    <text evidence="1">Pyrophosphatase that hydrolyzes non-canonical purine nucleotides such as inosine triphosphate (ITP), deoxyinosine triphosphate (dITP) or xanthosine 5'-triphosphate (XTP) to their respective monophosphate derivatives. The enzyme does not distinguish between the deoxy- and ribose forms. Probably excludes non-canonical purines from RNA and DNA precursor pools, thus preventing their incorporation into RNA and DNA and avoiding chromosomal lesions.</text>
</comment>
<comment type="catalytic activity">
    <reaction evidence="1">
        <text>ITP + H2O = IMP + diphosphate + H(+)</text>
        <dbReference type="Rhea" id="RHEA:29399"/>
        <dbReference type="ChEBI" id="CHEBI:15377"/>
        <dbReference type="ChEBI" id="CHEBI:15378"/>
        <dbReference type="ChEBI" id="CHEBI:33019"/>
        <dbReference type="ChEBI" id="CHEBI:58053"/>
        <dbReference type="ChEBI" id="CHEBI:61402"/>
        <dbReference type="EC" id="3.6.1.66"/>
    </reaction>
    <physiologicalReaction direction="left-to-right" evidence="1">
        <dbReference type="Rhea" id="RHEA:29400"/>
    </physiologicalReaction>
</comment>
<comment type="catalytic activity">
    <reaction evidence="1">
        <text>dITP + H2O = dIMP + diphosphate + H(+)</text>
        <dbReference type="Rhea" id="RHEA:28342"/>
        <dbReference type="ChEBI" id="CHEBI:15377"/>
        <dbReference type="ChEBI" id="CHEBI:15378"/>
        <dbReference type="ChEBI" id="CHEBI:33019"/>
        <dbReference type="ChEBI" id="CHEBI:61194"/>
        <dbReference type="ChEBI" id="CHEBI:61382"/>
        <dbReference type="EC" id="3.6.1.66"/>
    </reaction>
    <physiologicalReaction direction="left-to-right" evidence="1">
        <dbReference type="Rhea" id="RHEA:28343"/>
    </physiologicalReaction>
</comment>
<comment type="catalytic activity">
    <reaction evidence="1">
        <text>XTP + H2O = XMP + diphosphate + H(+)</text>
        <dbReference type="Rhea" id="RHEA:28610"/>
        <dbReference type="ChEBI" id="CHEBI:15377"/>
        <dbReference type="ChEBI" id="CHEBI:15378"/>
        <dbReference type="ChEBI" id="CHEBI:33019"/>
        <dbReference type="ChEBI" id="CHEBI:57464"/>
        <dbReference type="ChEBI" id="CHEBI:61314"/>
        <dbReference type="EC" id="3.6.1.66"/>
    </reaction>
    <physiologicalReaction direction="left-to-right" evidence="1">
        <dbReference type="Rhea" id="RHEA:28611"/>
    </physiologicalReaction>
</comment>
<comment type="cofactor">
    <cofactor evidence="1">
        <name>Mg(2+)</name>
        <dbReference type="ChEBI" id="CHEBI:18420"/>
    </cofactor>
    <cofactor evidence="1">
        <name>Mn(2+)</name>
        <dbReference type="ChEBI" id="CHEBI:29035"/>
    </cofactor>
    <text evidence="1">Binds 1 divalent metal cation per subunit; can use either Mg(2+) or Mn(2+).</text>
</comment>
<comment type="subunit">
    <text evidence="1">Homodimer.</text>
</comment>
<comment type="subcellular location">
    <subcellularLocation>
        <location evidence="1">Cytoplasm</location>
    </subcellularLocation>
</comment>
<comment type="similarity">
    <text evidence="1">Belongs to the HAM1 NTPase family.</text>
</comment>
<accession>D0MY11</accession>
<dbReference type="EC" id="3.6.1.66" evidence="1"/>
<dbReference type="EMBL" id="DS028121">
    <property type="protein sequence ID" value="EEY66059.1"/>
    <property type="molecule type" value="Genomic_DNA"/>
</dbReference>
<dbReference type="RefSeq" id="XP_002906658.1">
    <property type="nucleotide sequence ID" value="XM_002906612.1"/>
</dbReference>
<dbReference type="SMR" id="D0MY11"/>
<dbReference type="FunCoup" id="D0MY11">
    <property type="interactions" value="334"/>
</dbReference>
<dbReference type="STRING" id="403677.D0MY11"/>
<dbReference type="EnsemblProtists" id="PITG_03601T0">
    <property type="protein sequence ID" value="PITG_03601T0"/>
    <property type="gene ID" value="PITG_03601"/>
</dbReference>
<dbReference type="GeneID" id="9467553"/>
<dbReference type="KEGG" id="pif:PITG_03601"/>
<dbReference type="VEuPathDB" id="FungiDB:PITG_03601"/>
<dbReference type="eggNOG" id="KOG3222">
    <property type="taxonomic scope" value="Eukaryota"/>
</dbReference>
<dbReference type="HOGENOM" id="CLU_082080_1_1_1"/>
<dbReference type="InParanoid" id="D0MY11"/>
<dbReference type="OMA" id="YDPIFQP"/>
<dbReference type="OrthoDB" id="6288734at2759"/>
<dbReference type="Proteomes" id="UP000006643">
    <property type="component" value="Partially assembled WGS sequence"/>
</dbReference>
<dbReference type="GO" id="GO:0005737">
    <property type="term" value="C:cytoplasm"/>
    <property type="evidence" value="ECO:0007669"/>
    <property type="project" value="UniProtKB-SubCell"/>
</dbReference>
<dbReference type="GO" id="GO:0035870">
    <property type="term" value="F:dITP diphosphatase activity"/>
    <property type="evidence" value="ECO:0007669"/>
    <property type="project" value="RHEA"/>
</dbReference>
<dbReference type="GO" id="GO:0036220">
    <property type="term" value="F:ITP diphosphatase activity"/>
    <property type="evidence" value="ECO:0007669"/>
    <property type="project" value="RHEA"/>
</dbReference>
<dbReference type="GO" id="GO:0046872">
    <property type="term" value="F:metal ion binding"/>
    <property type="evidence" value="ECO:0007669"/>
    <property type="project" value="UniProtKB-KW"/>
</dbReference>
<dbReference type="GO" id="GO:0000166">
    <property type="term" value="F:nucleotide binding"/>
    <property type="evidence" value="ECO:0007669"/>
    <property type="project" value="UniProtKB-KW"/>
</dbReference>
<dbReference type="GO" id="GO:0036222">
    <property type="term" value="F:XTP diphosphatase activity"/>
    <property type="evidence" value="ECO:0007669"/>
    <property type="project" value="RHEA"/>
</dbReference>
<dbReference type="GO" id="GO:0009204">
    <property type="term" value="P:deoxyribonucleoside triphosphate catabolic process"/>
    <property type="evidence" value="ECO:0007669"/>
    <property type="project" value="UniProtKB-UniRule"/>
</dbReference>
<dbReference type="GO" id="GO:0009117">
    <property type="term" value="P:nucleotide metabolic process"/>
    <property type="evidence" value="ECO:0007669"/>
    <property type="project" value="UniProtKB-KW"/>
</dbReference>
<dbReference type="CDD" id="cd00515">
    <property type="entry name" value="HAM1"/>
    <property type="match status" value="1"/>
</dbReference>
<dbReference type="FunFam" id="3.90.950.10:FF:000003">
    <property type="entry name" value="Inosine triphosphate pyrophosphatase"/>
    <property type="match status" value="1"/>
</dbReference>
<dbReference type="Gene3D" id="3.90.950.10">
    <property type="match status" value="1"/>
</dbReference>
<dbReference type="HAMAP" id="MF_03148">
    <property type="entry name" value="HAM1_NTPase"/>
    <property type="match status" value="1"/>
</dbReference>
<dbReference type="InterPro" id="IPR027502">
    <property type="entry name" value="ITPase"/>
</dbReference>
<dbReference type="InterPro" id="IPR029001">
    <property type="entry name" value="ITPase-like_fam"/>
</dbReference>
<dbReference type="InterPro" id="IPR002637">
    <property type="entry name" value="RdgB/HAM1"/>
</dbReference>
<dbReference type="NCBIfam" id="TIGR00042">
    <property type="entry name" value="RdgB/HAM1 family non-canonical purine NTP pyrophosphatase"/>
    <property type="match status" value="1"/>
</dbReference>
<dbReference type="PANTHER" id="PTHR11067:SF9">
    <property type="entry name" value="INOSINE TRIPHOSPHATE PYROPHOSPHATASE"/>
    <property type="match status" value="1"/>
</dbReference>
<dbReference type="PANTHER" id="PTHR11067">
    <property type="entry name" value="INOSINE TRIPHOSPHATE PYROPHOSPHATASE/HAM1 PROTEIN"/>
    <property type="match status" value="1"/>
</dbReference>
<dbReference type="Pfam" id="PF01725">
    <property type="entry name" value="Ham1p_like"/>
    <property type="match status" value="1"/>
</dbReference>
<dbReference type="SUPFAM" id="SSF52972">
    <property type="entry name" value="ITPase-like"/>
    <property type="match status" value="1"/>
</dbReference>
<sequence>MSSAKPVLTFVTGNANKLKEVVAILGADFPFELRNQAVDLPELQGEPADIAKEKCRLAAKQVQGAVLVEDTSLCFNALKGLPGPYIKWFLEKTGHDGLNNMLAAYEDKSAYAQCIFAYAPAGAEPQVFVGQTHGKIVPARGPTTFGWDPVFQPDGFEQTYAEMEKVTKNQISHRYKALEALKTHLVKPVDK</sequence>
<keyword id="KW-0963">Cytoplasm</keyword>
<keyword id="KW-0378">Hydrolase</keyword>
<keyword id="KW-0460">Magnesium</keyword>
<keyword id="KW-0464">Manganese</keyword>
<keyword id="KW-0479">Metal-binding</keyword>
<keyword id="KW-0546">Nucleotide metabolism</keyword>
<keyword id="KW-0547">Nucleotide-binding</keyword>
<keyword id="KW-1185">Reference proteome</keyword>
<name>ITPA_PHYIT</name>
<protein>
    <recommendedName>
        <fullName evidence="1">Inosine triphosphate pyrophosphatase</fullName>
        <shortName evidence="1">ITPase</shortName>
        <shortName evidence="1">Inosine triphosphatase</shortName>
        <ecNumber evidence="1">3.6.1.66</ecNumber>
    </recommendedName>
    <alternativeName>
        <fullName evidence="1">Non-canonical purine NTP pyrophosphatase</fullName>
    </alternativeName>
    <alternativeName>
        <fullName evidence="1">Non-standard purine NTP pyrophosphatase</fullName>
    </alternativeName>
    <alternativeName>
        <fullName evidence="1">Nucleoside-triphosphate diphosphatase</fullName>
    </alternativeName>
    <alternativeName>
        <fullName evidence="1">Nucleoside-triphosphate pyrophosphatase</fullName>
        <shortName evidence="1">NTPase</shortName>
    </alternativeName>
    <alternativeName>
        <fullName evidence="1">XTP/dITP diphosphatase</fullName>
    </alternativeName>
</protein>